<gene>
    <name type="primary">rsrc2</name>
    <name type="ORF">si:ch211-110p13.2</name>
    <name type="ORF">zgc:85695</name>
</gene>
<keyword id="KW-0175">Coiled coil</keyword>
<keyword id="KW-1185">Reference proteome</keyword>
<dbReference type="EMBL" id="BC067581">
    <property type="protein sequence ID" value="AAH67581.1"/>
    <property type="molecule type" value="mRNA"/>
</dbReference>
<dbReference type="EMBL" id="BX957226">
    <property type="protein sequence ID" value="CAM13132.1"/>
    <property type="molecule type" value="Genomic_DNA"/>
</dbReference>
<dbReference type="RefSeq" id="NP_998445.1">
    <property type="nucleotide sequence ID" value="NM_213280.1"/>
</dbReference>
<dbReference type="FunCoup" id="Q6NWI1">
    <property type="interactions" value="1412"/>
</dbReference>
<dbReference type="STRING" id="7955.ENSDARP00000062365"/>
<dbReference type="PaxDb" id="7955-ENSDARP00000062365"/>
<dbReference type="Ensembl" id="ENSDART00000062366">
    <property type="protein sequence ID" value="ENSDARP00000062365"/>
    <property type="gene ID" value="ENSDARG00000042534"/>
</dbReference>
<dbReference type="GeneID" id="406566"/>
<dbReference type="KEGG" id="dre:406566"/>
<dbReference type="AGR" id="ZFIN:ZDB-GENE-040426-2457"/>
<dbReference type="CTD" id="65117"/>
<dbReference type="ZFIN" id="ZDB-GENE-040426-2457">
    <property type="gene designation" value="rsrc2"/>
</dbReference>
<dbReference type="eggNOG" id="ENOG502QQ3C">
    <property type="taxonomic scope" value="Eukaryota"/>
</dbReference>
<dbReference type="HOGENOM" id="CLU_051694_0_0_1"/>
<dbReference type="InParanoid" id="Q6NWI1"/>
<dbReference type="OMA" id="QEEMFKN"/>
<dbReference type="OrthoDB" id="1928974at2759"/>
<dbReference type="PhylomeDB" id="Q6NWI1"/>
<dbReference type="TreeFam" id="TF325523"/>
<dbReference type="PRO" id="PR:Q6NWI1"/>
<dbReference type="Proteomes" id="UP000000437">
    <property type="component" value="Chromosome 5"/>
</dbReference>
<dbReference type="Bgee" id="ENSDARG00000042534">
    <property type="expression patterns" value="Expressed in swim bladder and 27 other cell types or tissues"/>
</dbReference>
<dbReference type="ExpressionAtlas" id="Q6NWI1">
    <property type="expression patterns" value="baseline and differential"/>
</dbReference>
<dbReference type="InterPro" id="IPR028124">
    <property type="entry name" value="SMAP_dom"/>
</dbReference>
<dbReference type="PANTHER" id="PTHR22426">
    <property type="entry name" value="ARGININE_SERINE-RICH COILED-COIL PROTEIN 2"/>
    <property type="match status" value="1"/>
</dbReference>
<dbReference type="PANTHER" id="PTHR22426:SF2">
    <property type="entry name" value="ARGININE_SERINE-RICH COILED-COIL PROTEIN 2"/>
    <property type="match status" value="1"/>
</dbReference>
<dbReference type="Pfam" id="PF15477">
    <property type="entry name" value="SMAP"/>
    <property type="match status" value="1"/>
</dbReference>
<comment type="similarity">
    <text evidence="3">Belongs to the RSRC2 family.</text>
</comment>
<sequence>MAANDAELHDSFSGKSQPGENRKASRSSKHCSRSRSRSTERKRKSGDKRHKRSHSRSKEARKKDSEKALKCQSGSEERLEFSDKGRDRLSEDTEERHRRKDKKTSRPRSHSRSRSKEKRHHNRNWDKRRSRSRSRSRDKKRRARSRSNSRSKHRHRSRSRSKSREKKKRIEKSRKKSRSPSISPVTFRGRNTAMDAQEALARRLERAKKLQEQKEKDMLEKWQHQEKAAASTPQCDPAAAAPSPALNVAALLASGTQVTPQIAMAAQMAALQAKTLAETGIAVPSYYNPSAVNPMKFAEQEKKRKMLWQGKKEGDNKSQTAELWEKLNFGNKDQNVKFRKLMGIKGEEEAASSAAVNEDGLKTLQQQEEMFRNLDVQYEMARSQTHTQRGMGLGFSSSFSSRGMDAV</sequence>
<name>RSRC2_DANRE</name>
<protein>
    <recommendedName>
        <fullName>Arginine/serine-rich coiled-coil protein 2</fullName>
    </recommendedName>
</protein>
<feature type="chain" id="PRO_0000314941" description="Arginine/serine-rich coiled-coil protein 2">
    <location>
        <begin position="1"/>
        <end position="407"/>
    </location>
</feature>
<feature type="region of interest" description="Disordered" evidence="2">
    <location>
        <begin position="1"/>
        <end position="239"/>
    </location>
</feature>
<feature type="coiled-coil region" evidence="1">
    <location>
        <begin position="191"/>
        <end position="221"/>
    </location>
</feature>
<feature type="compositionally biased region" description="Basic and acidic residues" evidence="2">
    <location>
        <begin position="1"/>
        <end position="12"/>
    </location>
</feature>
<feature type="compositionally biased region" description="Basic residues" evidence="2">
    <location>
        <begin position="24"/>
        <end position="55"/>
    </location>
</feature>
<feature type="compositionally biased region" description="Basic and acidic residues" evidence="2">
    <location>
        <begin position="56"/>
        <end position="96"/>
    </location>
</feature>
<feature type="compositionally biased region" description="Basic residues" evidence="2">
    <location>
        <begin position="97"/>
        <end position="178"/>
    </location>
</feature>
<feature type="compositionally biased region" description="Basic and acidic residues" evidence="2">
    <location>
        <begin position="200"/>
        <end position="227"/>
    </location>
</feature>
<accession>Q6NWI1</accession>
<reference key="1">
    <citation type="submission" date="2004-03" db="EMBL/GenBank/DDBJ databases">
        <authorList>
            <consortium name="NIH - Zebrafish Gene Collection (ZGC) project"/>
        </authorList>
    </citation>
    <scope>NUCLEOTIDE SEQUENCE [LARGE SCALE MRNA]</scope>
    <source>
        <tissue>Embryo</tissue>
    </source>
</reference>
<reference key="2">
    <citation type="journal article" date="2013" name="Nature">
        <title>The zebrafish reference genome sequence and its relationship to the human genome.</title>
        <authorList>
            <person name="Howe K."/>
            <person name="Clark M.D."/>
            <person name="Torroja C.F."/>
            <person name="Torrance J."/>
            <person name="Berthelot C."/>
            <person name="Muffato M."/>
            <person name="Collins J.E."/>
            <person name="Humphray S."/>
            <person name="McLaren K."/>
            <person name="Matthews L."/>
            <person name="McLaren S."/>
            <person name="Sealy I."/>
            <person name="Caccamo M."/>
            <person name="Churcher C."/>
            <person name="Scott C."/>
            <person name="Barrett J.C."/>
            <person name="Koch R."/>
            <person name="Rauch G.J."/>
            <person name="White S."/>
            <person name="Chow W."/>
            <person name="Kilian B."/>
            <person name="Quintais L.T."/>
            <person name="Guerra-Assuncao J.A."/>
            <person name="Zhou Y."/>
            <person name="Gu Y."/>
            <person name="Yen J."/>
            <person name="Vogel J.H."/>
            <person name="Eyre T."/>
            <person name="Redmond S."/>
            <person name="Banerjee R."/>
            <person name="Chi J."/>
            <person name="Fu B."/>
            <person name="Langley E."/>
            <person name="Maguire S.F."/>
            <person name="Laird G.K."/>
            <person name="Lloyd D."/>
            <person name="Kenyon E."/>
            <person name="Donaldson S."/>
            <person name="Sehra H."/>
            <person name="Almeida-King J."/>
            <person name="Loveland J."/>
            <person name="Trevanion S."/>
            <person name="Jones M."/>
            <person name="Quail M."/>
            <person name="Willey D."/>
            <person name="Hunt A."/>
            <person name="Burton J."/>
            <person name="Sims S."/>
            <person name="McLay K."/>
            <person name="Plumb B."/>
            <person name="Davis J."/>
            <person name="Clee C."/>
            <person name="Oliver K."/>
            <person name="Clark R."/>
            <person name="Riddle C."/>
            <person name="Elliot D."/>
            <person name="Threadgold G."/>
            <person name="Harden G."/>
            <person name="Ware D."/>
            <person name="Begum S."/>
            <person name="Mortimore B."/>
            <person name="Kerry G."/>
            <person name="Heath P."/>
            <person name="Phillimore B."/>
            <person name="Tracey A."/>
            <person name="Corby N."/>
            <person name="Dunn M."/>
            <person name="Johnson C."/>
            <person name="Wood J."/>
            <person name="Clark S."/>
            <person name="Pelan S."/>
            <person name="Griffiths G."/>
            <person name="Smith M."/>
            <person name="Glithero R."/>
            <person name="Howden P."/>
            <person name="Barker N."/>
            <person name="Lloyd C."/>
            <person name="Stevens C."/>
            <person name="Harley J."/>
            <person name="Holt K."/>
            <person name="Panagiotidis G."/>
            <person name="Lovell J."/>
            <person name="Beasley H."/>
            <person name="Henderson C."/>
            <person name="Gordon D."/>
            <person name="Auger K."/>
            <person name="Wright D."/>
            <person name="Collins J."/>
            <person name="Raisen C."/>
            <person name="Dyer L."/>
            <person name="Leung K."/>
            <person name="Robertson L."/>
            <person name="Ambridge K."/>
            <person name="Leongamornlert D."/>
            <person name="McGuire S."/>
            <person name="Gilderthorp R."/>
            <person name="Griffiths C."/>
            <person name="Manthravadi D."/>
            <person name="Nichol S."/>
            <person name="Barker G."/>
            <person name="Whitehead S."/>
            <person name="Kay M."/>
            <person name="Brown J."/>
            <person name="Murnane C."/>
            <person name="Gray E."/>
            <person name="Humphries M."/>
            <person name="Sycamore N."/>
            <person name="Barker D."/>
            <person name="Saunders D."/>
            <person name="Wallis J."/>
            <person name="Babbage A."/>
            <person name="Hammond S."/>
            <person name="Mashreghi-Mohammadi M."/>
            <person name="Barr L."/>
            <person name="Martin S."/>
            <person name="Wray P."/>
            <person name="Ellington A."/>
            <person name="Matthews N."/>
            <person name="Ellwood M."/>
            <person name="Woodmansey R."/>
            <person name="Clark G."/>
            <person name="Cooper J."/>
            <person name="Tromans A."/>
            <person name="Grafham D."/>
            <person name="Skuce C."/>
            <person name="Pandian R."/>
            <person name="Andrews R."/>
            <person name="Harrison E."/>
            <person name="Kimberley A."/>
            <person name="Garnett J."/>
            <person name="Fosker N."/>
            <person name="Hall R."/>
            <person name="Garner P."/>
            <person name="Kelly D."/>
            <person name="Bird C."/>
            <person name="Palmer S."/>
            <person name="Gehring I."/>
            <person name="Berger A."/>
            <person name="Dooley C.M."/>
            <person name="Ersan-Urun Z."/>
            <person name="Eser C."/>
            <person name="Geiger H."/>
            <person name="Geisler M."/>
            <person name="Karotki L."/>
            <person name="Kirn A."/>
            <person name="Konantz J."/>
            <person name="Konantz M."/>
            <person name="Oberlander M."/>
            <person name="Rudolph-Geiger S."/>
            <person name="Teucke M."/>
            <person name="Lanz C."/>
            <person name="Raddatz G."/>
            <person name="Osoegawa K."/>
            <person name="Zhu B."/>
            <person name="Rapp A."/>
            <person name="Widaa S."/>
            <person name="Langford C."/>
            <person name="Yang F."/>
            <person name="Schuster S.C."/>
            <person name="Carter N.P."/>
            <person name="Harrow J."/>
            <person name="Ning Z."/>
            <person name="Herrero J."/>
            <person name="Searle S.M."/>
            <person name="Enright A."/>
            <person name="Geisler R."/>
            <person name="Plasterk R.H."/>
            <person name="Lee C."/>
            <person name="Westerfield M."/>
            <person name="de Jong P.J."/>
            <person name="Zon L.I."/>
            <person name="Postlethwait J.H."/>
            <person name="Nusslein-Volhard C."/>
            <person name="Hubbard T.J."/>
            <person name="Roest Crollius H."/>
            <person name="Rogers J."/>
            <person name="Stemple D.L."/>
        </authorList>
    </citation>
    <scope>NUCLEOTIDE SEQUENCE [LARGE SCALE GENOMIC DNA]</scope>
    <source>
        <strain>Tuebingen</strain>
    </source>
</reference>
<organism>
    <name type="scientific">Danio rerio</name>
    <name type="common">Zebrafish</name>
    <name type="synonym">Brachydanio rerio</name>
    <dbReference type="NCBI Taxonomy" id="7955"/>
    <lineage>
        <taxon>Eukaryota</taxon>
        <taxon>Metazoa</taxon>
        <taxon>Chordata</taxon>
        <taxon>Craniata</taxon>
        <taxon>Vertebrata</taxon>
        <taxon>Euteleostomi</taxon>
        <taxon>Actinopterygii</taxon>
        <taxon>Neopterygii</taxon>
        <taxon>Teleostei</taxon>
        <taxon>Ostariophysi</taxon>
        <taxon>Cypriniformes</taxon>
        <taxon>Danionidae</taxon>
        <taxon>Danioninae</taxon>
        <taxon>Danio</taxon>
    </lineage>
</organism>
<proteinExistence type="evidence at transcript level"/>
<evidence type="ECO:0000255" key="1"/>
<evidence type="ECO:0000256" key="2">
    <source>
        <dbReference type="SAM" id="MobiDB-lite"/>
    </source>
</evidence>
<evidence type="ECO:0000305" key="3"/>